<keyword id="KW-0028">Amino-acid biosynthesis</keyword>
<keyword id="KW-0963">Cytoplasm</keyword>
<keyword id="KW-0368">Histidine biosynthesis</keyword>
<keyword id="KW-0413">Isomerase</keyword>
<sequence>MKLIPAIDLMNGKCVRLFKGDFNKRKDFSRKPYEQAKYWEEQGAKCIHIVDLDAAKSGYPSNDQSIKKIAKEVNIPIQIGGGIRSLERIEQLFSYGVDKVIMGTSAIENKELVKNLSTKFPRRIIIGIDAKDGKVSTRGWIEQSDVLATDLVKEFSKFEIASFIVTDINTDGTLEGTNEVFIKKILEITDIPVIASGGVGAISDLLSLTKFEHLGLCGVIVGKALYENKFKISEANNILSPERLQDIPINKDYFA</sequence>
<organism>
    <name type="scientific">Prochlorococcus marinus (strain MIT 9515)</name>
    <dbReference type="NCBI Taxonomy" id="167542"/>
    <lineage>
        <taxon>Bacteria</taxon>
        <taxon>Bacillati</taxon>
        <taxon>Cyanobacteriota</taxon>
        <taxon>Cyanophyceae</taxon>
        <taxon>Synechococcales</taxon>
        <taxon>Prochlorococcaceae</taxon>
        <taxon>Prochlorococcus</taxon>
    </lineage>
</organism>
<name>HIS4_PROM5</name>
<dbReference type="EC" id="5.3.1.16" evidence="1"/>
<dbReference type="EMBL" id="CP000552">
    <property type="protein sequence ID" value="ABM71994.1"/>
    <property type="molecule type" value="Genomic_DNA"/>
</dbReference>
<dbReference type="RefSeq" id="WP_011820099.1">
    <property type="nucleotide sequence ID" value="NC_008817.1"/>
</dbReference>
<dbReference type="SMR" id="A2BW33"/>
<dbReference type="STRING" id="167542.P9515_07851"/>
<dbReference type="GeneID" id="60201316"/>
<dbReference type="KEGG" id="pmc:P9515_07851"/>
<dbReference type="eggNOG" id="COG0106">
    <property type="taxonomic scope" value="Bacteria"/>
</dbReference>
<dbReference type="HOGENOM" id="CLU_048577_1_1_3"/>
<dbReference type="OrthoDB" id="9807749at2"/>
<dbReference type="UniPathway" id="UPA00031">
    <property type="reaction ID" value="UER00009"/>
</dbReference>
<dbReference type="Proteomes" id="UP000001589">
    <property type="component" value="Chromosome"/>
</dbReference>
<dbReference type="GO" id="GO:0005737">
    <property type="term" value="C:cytoplasm"/>
    <property type="evidence" value="ECO:0007669"/>
    <property type="project" value="UniProtKB-SubCell"/>
</dbReference>
<dbReference type="GO" id="GO:0003949">
    <property type="term" value="F:1-(5-phosphoribosyl)-5-[(5-phosphoribosylamino)methylideneamino]imidazole-4-carboxamide isomerase activity"/>
    <property type="evidence" value="ECO:0007669"/>
    <property type="project" value="UniProtKB-UniRule"/>
</dbReference>
<dbReference type="GO" id="GO:0000105">
    <property type="term" value="P:L-histidine biosynthetic process"/>
    <property type="evidence" value="ECO:0007669"/>
    <property type="project" value="UniProtKB-UniRule"/>
</dbReference>
<dbReference type="GO" id="GO:0000162">
    <property type="term" value="P:L-tryptophan biosynthetic process"/>
    <property type="evidence" value="ECO:0007669"/>
    <property type="project" value="TreeGrafter"/>
</dbReference>
<dbReference type="CDD" id="cd04732">
    <property type="entry name" value="HisA"/>
    <property type="match status" value="1"/>
</dbReference>
<dbReference type="FunFam" id="3.20.20.70:FF:000009">
    <property type="entry name" value="1-(5-phosphoribosyl)-5-[(5-phosphoribosylamino)methylideneamino] imidazole-4-carboxamide isomerase"/>
    <property type="match status" value="1"/>
</dbReference>
<dbReference type="Gene3D" id="3.20.20.70">
    <property type="entry name" value="Aldolase class I"/>
    <property type="match status" value="1"/>
</dbReference>
<dbReference type="HAMAP" id="MF_01014">
    <property type="entry name" value="HisA"/>
    <property type="match status" value="1"/>
</dbReference>
<dbReference type="InterPro" id="IPR013785">
    <property type="entry name" value="Aldolase_TIM"/>
</dbReference>
<dbReference type="InterPro" id="IPR006062">
    <property type="entry name" value="His_biosynth"/>
</dbReference>
<dbReference type="InterPro" id="IPR006063">
    <property type="entry name" value="HisA_bact_arch"/>
</dbReference>
<dbReference type="InterPro" id="IPR044524">
    <property type="entry name" value="Isoase_HisA-like"/>
</dbReference>
<dbReference type="InterPro" id="IPR023016">
    <property type="entry name" value="Isoase_HisA-like_bact"/>
</dbReference>
<dbReference type="InterPro" id="IPR011060">
    <property type="entry name" value="RibuloseP-bd_barrel"/>
</dbReference>
<dbReference type="NCBIfam" id="TIGR00007">
    <property type="entry name" value="1-(5-phosphoribosyl)-5-[(5-phosphoribosylamino)methylideneamino]imidazole-4-carboxamide isomerase"/>
    <property type="match status" value="1"/>
</dbReference>
<dbReference type="PANTHER" id="PTHR43090">
    <property type="entry name" value="1-(5-PHOSPHORIBOSYL)-5-[(5-PHOSPHORIBOSYLAMINO)METHYLIDENEAMINO] IMIDAZOLE-4-CARBOXAMIDE ISOMERASE"/>
    <property type="match status" value="1"/>
</dbReference>
<dbReference type="PANTHER" id="PTHR43090:SF2">
    <property type="entry name" value="1-(5-PHOSPHORIBOSYL)-5-[(5-PHOSPHORIBOSYLAMINO)METHYLIDENEAMINO] IMIDAZOLE-4-CARBOXAMIDE ISOMERASE"/>
    <property type="match status" value="1"/>
</dbReference>
<dbReference type="Pfam" id="PF00977">
    <property type="entry name" value="His_biosynth"/>
    <property type="match status" value="1"/>
</dbReference>
<dbReference type="SUPFAM" id="SSF51366">
    <property type="entry name" value="Ribulose-phoshate binding barrel"/>
    <property type="match status" value="1"/>
</dbReference>
<feature type="chain" id="PRO_0000290510" description="1-(5-phosphoribosyl)-5-[(5-phosphoribosylamino)methylideneamino] imidazole-4-carboxamide isomerase">
    <location>
        <begin position="1"/>
        <end position="255"/>
    </location>
</feature>
<feature type="active site" description="Proton acceptor" evidence="1">
    <location>
        <position position="8"/>
    </location>
</feature>
<feature type="active site" description="Proton donor" evidence="1">
    <location>
        <position position="129"/>
    </location>
</feature>
<reference key="1">
    <citation type="journal article" date="2007" name="PLoS Genet.">
        <title>Patterns and implications of gene gain and loss in the evolution of Prochlorococcus.</title>
        <authorList>
            <person name="Kettler G.C."/>
            <person name="Martiny A.C."/>
            <person name="Huang K."/>
            <person name="Zucker J."/>
            <person name="Coleman M.L."/>
            <person name="Rodrigue S."/>
            <person name="Chen F."/>
            <person name="Lapidus A."/>
            <person name="Ferriera S."/>
            <person name="Johnson J."/>
            <person name="Steglich C."/>
            <person name="Church G.M."/>
            <person name="Richardson P."/>
            <person name="Chisholm S.W."/>
        </authorList>
    </citation>
    <scope>NUCLEOTIDE SEQUENCE [LARGE SCALE GENOMIC DNA]</scope>
    <source>
        <strain>MIT 9515</strain>
    </source>
</reference>
<comment type="catalytic activity">
    <reaction evidence="1">
        <text>1-(5-phospho-beta-D-ribosyl)-5-[(5-phospho-beta-D-ribosylamino)methylideneamino]imidazole-4-carboxamide = 5-[(5-phospho-1-deoxy-D-ribulos-1-ylimino)methylamino]-1-(5-phospho-beta-D-ribosyl)imidazole-4-carboxamide</text>
        <dbReference type="Rhea" id="RHEA:15469"/>
        <dbReference type="ChEBI" id="CHEBI:58435"/>
        <dbReference type="ChEBI" id="CHEBI:58525"/>
        <dbReference type="EC" id="5.3.1.16"/>
    </reaction>
</comment>
<comment type="pathway">
    <text evidence="1">Amino-acid biosynthesis; L-histidine biosynthesis; L-histidine from 5-phospho-alpha-D-ribose 1-diphosphate: step 4/9.</text>
</comment>
<comment type="subcellular location">
    <subcellularLocation>
        <location evidence="1">Cytoplasm</location>
    </subcellularLocation>
</comment>
<comment type="similarity">
    <text evidence="1">Belongs to the HisA/HisF family.</text>
</comment>
<evidence type="ECO:0000255" key="1">
    <source>
        <dbReference type="HAMAP-Rule" id="MF_01014"/>
    </source>
</evidence>
<gene>
    <name evidence="1" type="primary">hisA</name>
    <name type="ordered locus">P9515_07851</name>
</gene>
<protein>
    <recommendedName>
        <fullName evidence="1">1-(5-phosphoribosyl)-5-[(5-phosphoribosylamino)methylideneamino] imidazole-4-carboxamide isomerase</fullName>
        <ecNumber evidence="1">5.3.1.16</ecNumber>
    </recommendedName>
    <alternativeName>
        <fullName evidence="1">Phosphoribosylformimino-5-aminoimidazole carboxamide ribotide isomerase</fullName>
    </alternativeName>
</protein>
<accession>A2BW33</accession>
<proteinExistence type="inferred from homology"/>